<comment type="catalytic activity">
    <reaction evidence="1">
        <text>sn-glycerol 3-phosphate + an acyl-CoA = a 1-acyl-sn-glycero-3-phosphate + CoA</text>
        <dbReference type="Rhea" id="RHEA:15325"/>
        <dbReference type="ChEBI" id="CHEBI:57287"/>
        <dbReference type="ChEBI" id="CHEBI:57597"/>
        <dbReference type="ChEBI" id="CHEBI:57970"/>
        <dbReference type="ChEBI" id="CHEBI:58342"/>
        <dbReference type="EC" id="2.3.1.15"/>
    </reaction>
</comment>
<comment type="pathway">
    <text evidence="1">Phospholipid metabolism; CDP-diacylglycerol biosynthesis; CDP-diacylglycerol from sn-glycerol 3-phosphate: step 1/3.</text>
</comment>
<comment type="subcellular location">
    <subcellularLocation>
        <location evidence="1">Cell inner membrane</location>
        <topology evidence="1">Peripheral membrane protein</topology>
        <orientation evidence="1">Cytoplasmic side</orientation>
    </subcellularLocation>
</comment>
<comment type="domain">
    <text evidence="1">The HXXXXD motif is essential for acyltransferase activity and may constitute the binding site for the phosphate moiety of the glycerol-3-phosphate.</text>
</comment>
<comment type="similarity">
    <text evidence="1">Belongs to the GPAT/DAPAT family.</text>
</comment>
<reference key="1">
    <citation type="submission" date="2008-02" db="EMBL/GenBank/DDBJ databases">
        <title>Complete sequence of Shewanella woodyi ATCC 51908.</title>
        <authorList>
            <consortium name="US DOE Joint Genome Institute"/>
            <person name="Copeland A."/>
            <person name="Lucas S."/>
            <person name="Lapidus A."/>
            <person name="Glavina del Rio T."/>
            <person name="Dalin E."/>
            <person name="Tice H."/>
            <person name="Bruce D."/>
            <person name="Goodwin L."/>
            <person name="Pitluck S."/>
            <person name="Sims D."/>
            <person name="Brettin T."/>
            <person name="Detter J.C."/>
            <person name="Han C."/>
            <person name="Kuske C.R."/>
            <person name="Schmutz J."/>
            <person name="Larimer F."/>
            <person name="Land M."/>
            <person name="Hauser L."/>
            <person name="Kyrpides N."/>
            <person name="Lykidis A."/>
            <person name="Zhao J.-S."/>
            <person name="Richardson P."/>
        </authorList>
    </citation>
    <scope>NUCLEOTIDE SEQUENCE [LARGE SCALE GENOMIC DNA]</scope>
    <source>
        <strain>ATCC 51908 / MS32</strain>
    </source>
</reference>
<gene>
    <name evidence="1" type="primary">plsB</name>
    <name type="ordered locus">Swoo_0181</name>
</gene>
<dbReference type="EC" id="2.3.1.15" evidence="1"/>
<dbReference type="EMBL" id="CP000961">
    <property type="protein sequence ID" value="ACA84482.1"/>
    <property type="molecule type" value="Genomic_DNA"/>
</dbReference>
<dbReference type="RefSeq" id="WP_012322831.1">
    <property type="nucleotide sequence ID" value="NC_010506.1"/>
</dbReference>
<dbReference type="SMR" id="B1KM69"/>
<dbReference type="STRING" id="392500.Swoo_0181"/>
<dbReference type="KEGG" id="swd:Swoo_0181"/>
<dbReference type="eggNOG" id="COG2937">
    <property type="taxonomic scope" value="Bacteria"/>
</dbReference>
<dbReference type="HOGENOM" id="CLU_015407_0_0_6"/>
<dbReference type="UniPathway" id="UPA00557">
    <property type="reaction ID" value="UER00612"/>
</dbReference>
<dbReference type="Proteomes" id="UP000002168">
    <property type="component" value="Chromosome"/>
</dbReference>
<dbReference type="GO" id="GO:0005886">
    <property type="term" value="C:plasma membrane"/>
    <property type="evidence" value="ECO:0007669"/>
    <property type="project" value="UniProtKB-SubCell"/>
</dbReference>
<dbReference type="GO" id="GO:0004366">
    <property type="term" value="F:glycerol-3-phosphate O-acyltransferase activity"/>
    <property type="evidence" value="ECO:0007669"/>
    <property type="project" value="UniProtKB-UniRule"/>
</dbReference>
<dbReference type="GO" id="GO:0016024">
    <property type="term" value="P:CDP-diacylglycerol biosynthetic process"/>
    <property type="evidence" value="ECO:0007669"/>
    <property type="project" value="UniProtKB-UniRule"/>
</dbReference>
<dbReference type="GO" id="GO:0006631">
    <property type="term" value="P:fatty acid metabolic process"/>
    <property type="evidence" value="ECO:0007669"/>
    <property type="project" value="TreeGrafter"/>
</dbReference>
<dbReference type="CDD" id="cd07993">
    <property type="entry name" value="LPLAT_DHAPAT-like"/>
    <property type="match status" value="1"/>
</dbReference>
<dbReference type="HAMAP" id="MF_00393">
    <property type="entry name" value="Glyc3P_acyltrans"/>
    <property type="match status" value="1"/>
</dbReference>
<dbReference type="InterPro" id="IPR022284">
    <property type="entry name" value="GPAT/DHAPAT"/>
</dbReference>
<dbReference type="InterPro" id="IPR045520">
    <property type="entry name" value="GPAT/DHAPAT_C"/>
</dbReference>
<dbReference type="InterPro" id="IPR041728">
    <property type="entry name" value="GPAT/DHAPAT_LPLAT"/>
</dbReference>
<dbReference type="InterPro" id="IPR028354">
    <property type="entry name" value="GPAT_PlsB"/>
</dbReference>
<dbReference type="InterPro" id="IPR002123">
    <property type="entry name" value="Plipid/glycerol_acylTrfase"/>
</dbReference>
<dbReference type="NCBIfam" id="TIGR03703">
    <property type="entry name" value="plsB"/>
    <property type="match status" value="1"/>
</dbReference>
<dbReference type="NCBIfam" id="NF003441">
    <property type="entry name" value="PRK04974.1"/>
    <property type="match status" value="1"/>
</dbReference>
<dbReference type="PANTHER" id="PTHR12563:SF17">
    <property type="entry name" value="DIHYDROXYACETONE PHOSPHATE ACYLTRANSFERASE"/>
    <property type="match status" value="1"/>
</dbReference>
<dbReference type="PANTHER" id="PTHR12563">
    <property type="entry name" value="GLYCEROL-3-PHOSPHATE ACYLTRANSFERASE"/>
    <property type="match status" value="1"/>
</dbReference>
<dbReference type="Pfam" id="PF01553">
    <property type="entry name" value="Acyltransferase"/>
    <property type="match status" value="1"/>
</dbReference>
<dbReference type="Pfam" id="PF19277">
    <property type="entry name" value="GPAT_C"/>
    <property type="match status" value="1"/>
</dbReference>
<dbReference type="PIRSF" id="PIRSF500064">
    <property type="entry name" value="GPAT"/>
    <property type="match status" value="1"/>
</dbReference>
<dbReference type="PIRSF" id="PIRSF000437">
    <property type="entry name" value="GPAT_DHAPAT"/>
    <property type="match status" value="1"/>
</dbReference>
<dbReference type="SMART" id="SM00563">
    <property type="entry name" value="PlsC"/>
    <property type="match status" value="1"/>
</dbReference>
<dbReference type="SUPFAM" id="SSF69593">
    <property type="entry name" value="Glycerol-3-phosphate (1)-acyltransferase"/>
    <property type="match status" value="1"/>
</dbReference>
<keyword id="KW-0012">Acyltransferase</keyword>
<keyword id="KW-0997">Cell inner membrane</keyword>
<keyword id="KW-1003">Cell membrane</keyword>
<keyword id="KW-0444">Lipid biosynthesis</keyword>
<keyword id="KW-0443">Lipid metabolism</keyword>
<keyword id="KW-0472">Membrane</keyword>
<keyword id="KW-0594">Phospholipid biosynthesis</keyword>
<keyword id="KW-1208">Phospholipid metabolism</keyword>
<keyword id="KW-1185">Reference proteome</keyword>
<keyword id="KW-0808">Transferase</keyword>
<proteinExistence type="inferred from homology"/>
<feature type="chain" id="PRO_1000123098" description="Glycerol-3-phosphate acyltransferase">
    <location>
        <begin position="1"/>
        <end position="807"/>
    </location>
</feature>
<feature type="short sequence motif" description="HXXXXD motif">
    <location>
        <begin position="308"/>
        <end position="313"/>
    </location>
</feature>
<evidence type="ECO:0000255" key="1">
    <source>
        <dbReference type="HAMAP-Rule" id="MF_00393"/>
    </source>
</evidence>
<sequence length="807" mass="91711">MSKQDSLWFKSLRWLQKKLVHTIVVPQEPFKDLNLDPEKPLVYVMKTESLSDIAALSEITGELGLPSPYEPLEVEGRSTPRVVCLEGAKPLMGKRESNEFFLSSFMDLLKAHKESPDLDIQLVPVSLYWGRTPGKEDDTMKAAVLERENPTWLRKCLMILFLGRHNFVQFSNSVSIRYMADEHGTDKRIAHKLARVARVHFSRQRKVMTGPVLPKRQALFHALINSESLKRAIQEEATSKKISEVEARAKAMEYLDEIAADYSDSLVRIAERFLTWLWNKLYKGINIKGAEQIRQLHHDGHEIIYVPCHRSHMDYLLLSYILYYQGMVPPHIAAGINLNFWPAGPMFRRGGAFFIRRSFRGNKLYTAVFREYLDQLFTKGYSVEYFTEGGRSRTGRLLAPKTGMIAMTLNSVLRGMERPVTLVPVYLGYDHVMEVATYHKELSGKKKKKESVWQVFGALRKLGNFGQGYVNFGKPITLHSFLNEQVPDWREEIASDPEQKPTWLTPVVNTLANQVMTNINDAAAVSSVTLTSLVLLASEQNALERTQLEKQLDLYLKLLKDLPYTSYTSVVEGDGKQLVTQGLELKKLQLDSDPLGDIVSIDESISIAMTYYRNNIIHLMIIPSLVASCLTQHERITRDEIKAIIADFYPLLEAELFMGVEDTDKLVEQILDLFIEQQLIREDTGFSVVETSINQLLLLAGTVSETLQRYAIIFNLLADFPEMERSDLEAESHKLAKRLGALHGITAPEFYDKNLYRTLSVKLKDLGYLKDNGNKADVERVRASANGLLRSSVRQTIVDSVAAERSA</sequence>
<accession>B1KM69</accession>
<protein>
    <recommendedName>
        <fullName evidence="1">Glycerol-3-phosphate acyltransferase</fullName>
        <shortName evidence="1">GPAT</shortName>
        <ecNumber evidence="1">2.3.1.15</ecNumber>
    </recommendedName>
</protein>
<organism>
    <name type="scientific">Shewanella woodyi (strain ATCC 51908 / MS32)</name>
    <dbReference type="NCBI Taxonomy" id="392500"/>
    <lineage>
        <taxon>Bacteria</taxon>
        <taxon>Pseudomonadati</taxon>
        <taxon>Pseudomonadota</taxon>
        <taxon>Gammaproteobacteria</taxon>
        <taxon>Alteromonadales</taxon>
        <taxon>Shewanellaceae</taxon>
        <taxon>Shewanella</taxon>
    </lineage>
</organism>
<name>PLSB_SHEWM</name>